<name>RL20_CUPPJ</name>
<sequence length="118" mass="13513">MPRVKRGVTARARHKKVIDAAKGYRGRRNNVYRIAKQAVMRAGQYAYRDRRNKKRVFRALWIARINAATREHGMTYSVFMNGLKKASIELDRKVLSDMAIHDKPAFAAIVNQVKATVA</sequence>
<organism>
    <name type="scientific">Cupriavidus pinatubonensis (strain JMP 134 / LMG 1197)</name>
    <name type="common">Cupriavidus necator (strain JMP 134)</name>
    <dbReference type="NCBI Taxonomy" id="264198"/>
    <lineage>
        <taxon>Bacteria</taxon>
        <taxon>Pseudomonadati</taxon>
        <taxon>Pseudomonadota</taxon>
        <taxon>Betaproteobacteria</taxon>
        <taxon>Burkholderiales</taxon>
        <taxon>Burkholderiaceae</taxon>
        <taxon>Cupriavidus</taxon>
    </lineage>
</organism>
<reference key="1">
    <citation type="journal article" date="2010" name="PLoS ONE">
        <title>The complete multipartite genome sequence of Cupriavidus necator JMP134, a versatile pollutant degrader.</title>
        <authorList>
            <person name="Lykidis A."/>
            <person name="Perez-Pantoja D."/>
            <person name="Ledger T."/>
            <person name="Mavromatis K."/>
            <person name="Anderson I.J."/>
            <person name="Ivanova N.N."/>
            <person name="Hooper S.D."/>
            <person name="Lapidus A."/>
            <person name="Lucas S."/>
            <person name="Gonzalez B."/>
            <person name="Kyrpides N.C."/>
        </authorList>
    </citation>
    <scope>NUCLEOTIDE SEQUENCE [LARGE SCALE GENOMIC DNA]</scope>
    <source>
        <strain>JMP134 / LMG 1197</strain>
    </source>
</reference>
<feature type="chain" id="PRO_0000243721" description="Large ribosomal subunit protein bL20">
    <location>
        <begin position="1"/>
        <end position="118"/>
    </location>
</feature>
<accession>Q472N5</accession>
<evidence type="ECO:0000255" key="1">
    <source>
        <dbReference type="HAMAP-Rule" id="MF_00382"/>
    </source>
</evidence>
<evidence type="ECO:0000305" key="2"/>
<gene>
    <name evidence="1" type="primary">rplT</name>
    <name type="ordered locus">Reut_A1278</name>
</gene>
<proteinExistence type="inferred from homology"/>
<keyword id="KW-0687">Ribonucleoprotein</keyword>
<keyword id="KW-0689">Ribosomal protein</keyword>
<keyword id="KW-0694">RNA-binding</keyword>
<keyword id="KW-0699">rRNA-binding</keyword>
<dbReference type="EMBL" id="CP000090">
    <property type="protein sequence ID" value="AAZ60648.1"/>
    <property type="molecule type" value="Genomic_DNA"/>
</dbReference>
<dbReference type="SMR" id="Q472N5"/>
<dbReference type="STRING" id="264198.Reut_A1278"/>
<dbReference type="KEGG" id="reu:Reut_A1278"/>
<dbReference type="eggNOG" id="COG0292">
    <property type="taxonomic scope" value="Bacteria"/>
</dbReference>
<dbReference type="HOGENOM" id="CLU_123265_0_1_4"/>
<dbReference type="OrthoDB" id="9808966at2"/>
<dbReference type="GO" id="GO:1990904">
    <property type="term" value="C:ribonucleoprotein complex"/>
    <property type="evidence" value="ECO:0007669"/>
    <property type="project" value="UniProtKB-KW"/>
</dbReference>
<dbReference type="GO" id="GO:0005840">
    <property type="term" value="C:ribosome"/>
    <property type="evidence" value="ECO:0007669"/>
    <property type="project" value="UniProtKB-KW"/>
</dbReference>
<dbReference type="GO" id="GO:0019843">
    <property type="term" value="F:rRNA binding"/>
    <property type="evidence" value="ECO:0007669"/>
    <property type="project" value="UniProtKB-UniRule"/>
</dbReference>
<dbReference type="GO" id="GO:0003735">
    <property type="term" value="F:structural constituent of ribosome"/>
    <property type="evidence" value="ECO:0007669"/>
    <property type="project" value="InterPro"/>
</dbReference>
<dbReference type="GO" id="GO:0000027">
    <property type="term" value="P:ribosomal large subunit assembly"/>
    <property type="evidence" value="ECO:0007669"/>
    <property type="project" value="UniProtKB-UniRule"/>
</dbReference>
<dbReference type="GO" id="GO:0006412">
    <property type="term" value="P:translation"/>
    <property type="evidence" value="ECO:0007669"/>
    <property type="project" value="InterPro"/>
</dbReference>
<dbReference type="CDD" id="cd07026">
    <property type="entry name" value="Ribosomal_L20"/>
    <property type="match status" value="1"/>
</dbReference>
<dbReference type="FunFam" id="1.10.1900.20:FF:000001">
    <property type="entry name" value="50S ribosomal protein L20"/>
    <property type="match status" value="1"/>
</dbReference>
<dbReference type="Gene3D" id="6.10.160.10">
    <property type="match status" value="1"/>
</dbReference>
<dbReference type="Gene3D" id="1.10.1900.20">
    <property type="entry name" value="Ribosomal protein L20"/>
    <property type="match status" value="1"/>
</dbReference>
<dbReference type="HAMAP" id="MF_00382">
    <property type="entry name" value="Ribosomal_bL20"/>
    <property type="match status" value="1"/>
</dbReference>
<dbReference type="InterPro" id="IPR005813">
    <property type="entry name" value="Ribosomal_bL20"/>
</dbReference>
<dbReference type="InterPro" id="IPR049946">
    <property type="entry name" value="RIBOSOMAL_L20_CS"/>
</dbReference>
<dbReference type="InterPro" id="IPR035566">
    <property type="entry name" value="Ribosomal_protein_bL20_C"/>
</dbReference>
<dbReference type="NCBIfam" id="TIGR01032">
    <property type="entry name" value="rplT_bact"/>
    <property type="match status" value="1"/>
</dbReference>
<dbReference type="PANTHER" id="PTHR10986">
    <property type="entry name" value="39S RIBOSOMAL PROTEIN L20"/>
    <property type="match status" value="1"/>
</dbReference>
<dbReference type="Pfam" id="PF00453">
    <property type="entry name" value="Ribosomal_L20"/>
    <property type="match status" value="1"/>
</dbReference>
<dbReference type="PRINTS" id="PR00062">
    <property type="entry name" value="RIBOSOMALL20"/>
</dbReference>
<dbReference type="SUPFAM" id="SSF74731">
    <property type="entry name" value="Ribosomal protein L20"/>
    <property type="match status" value="1"/>
</dbReference>
<dbReference type="PROSITE" id="PS00937">
    <property type="entry name" value="RIBOSOMAL_L20"/>
    <property type="match status" value="1"/>
</dbReference>
<comment type="function">
    <text evidence="1">Binds directly to 23S ribosomal RNA and is necessary for the in vitro assembly process of the 50S ribosomal subunit. It is not involved in the protein synthesizing functions of that subunit.</text>
</comment>
<comment type="similarity">
    <text evidence="1">Belongs to the bacterial ribosomal protein bL20 family.</text>
</comment>
<protein>
    <recommendedName>
        <fullName evidence="1">Large ribosomal subunit protein bL20</fullName>
    </recommendedName>
    <alternativeName>
        <fullName evidence="2">50S ribosomal protein L20</fullName>
    </alternativeName>
</protein>